<comment type="function">
    <text evidence="1">Sequence-specific endonuclease that cleaves unmethylated GATC sequences. It is involved in DNA mismatch repair.</text>
</comment>
<comment type="subcellular location">
    <subcellularLocation>
        <location evidence="1">Cytoplasm</location>
    </subcellularLocation>
</comment>
<comment type="similarity">
    <text evidence="1">Belongs to the MutH family.</text>
</comment>
<gene>
    <name evidence="1" type="primary">mutH</name>
    <name type="ordered locus">SFV_2909</name>
</gene>
<organism>
    <name type="scientific">Shigella flexneri serotype 5b (strain 8401)</name>
    <dbReference type="NCBI Taxonomy" id="373384"/>
    <lineage>
        <taxon>Bacteria</taxon>
        <taxon>Pseudomonadati</taxon>
        <taxon>Pseudomonadota</taxon>
        <taxon>Gammaproteobacteria</taxon>
        <taxon>Enterobacterales</taxon>
        <taxon>Enterobacteriaceae</taxon>
        <taxon>Shigella</taxon>
    </lineage>
</organism>
<accession>Q0T133</accession>
<sequence length="229" mass="25602">MSQPRPLLSPPETEEQLLAQAQQLSGYTLGELAALDGLVTPENLKRDKGWIGVLLEIWLGASAGSKPEQDFAALGVELKTIPVDSLGRPLETTFVCVARLTGNSGVTWETSHVRHKLKRVLWIPVEGERSIPLAQRRVGSPLLWSPNEEEDRQLREDWEELMDMIVLGQVERITARHGEYLQIRPKAANAKALTEAIGARGERILTLPRGFYLKKNFTSALLARHFLIQ</sequence>
<protein>
    <recommendedName>
        <fullName evidence="1">DNA mismatch repair protein MutH</fullName>
    </recommendedName>
    <alternativeName>
        <fullName evidence="1">Methyl-directed mismatch repair protein</fullName>
    </alternativeName>
</protein>
<dbReference type="EMBL" id="CP000266">
    <property type="protein sequence ID" value="ABF04982.1"/>
    <property type="molecule type" value="Genomic_DNA"/>
</dbReference>
<dbReference type="RefSeq" id="WP_000082199.1">
    <property type="nucleotide sequence ID" value="NC_008258.1"/>
</dbReference>
<dbReference type="SMR" id="Q0T133"/>
<dbReference type="KEGG" id="sfv:SFV_2909"/>
<dbReference type="HOGENOM" id="CLU_086669_0_0_6"/>
<dbReference type="Proteomes" id="UP000000659">
    <property type="component" value="Chromosome"/>
</dbReference>
<dbReference type="GO" id="GO:0005737">
    <property type="term" value="C:cytoplasm"/>
    <property type="evidence" value="ECO:0007669"/>
    <property type="project" value="UniProtKB-SubCell"/>
</dbReference>
<dbReference type="GO" id="GO:0003677">
    <property type="term" value="F:DNA binding"/>
    <property type="evidence" value="ECO:0007669"/>
    <property type="project" value="InterPro"/>
</dbReference>
<dbReference type="GO" id="GO:0004519">
    <property type="term" value="F:endonuclease activity"/>
    <property type="evidence" value="ECO:0007669"/>
    <property type="project" value="UniProtKB-UniRule"/>
</dbReference>
<dbReference type="GO" id="GO:0006304">
    <property type="term" value="P:DNA modification"/>
    <property type="evidence" value="ECO:0007669"/>
    <property type="project" value="InterPro"/>
</dbReference>
<dbReference type="GO" id="GO:0006298">
    <property type="term" value="P:mismatch repair"/>
    <property type="evidence" value="ECO:0007669"/>
    <property type="project" value="UniProtKB-UniRule"/>
</dbReference>
<dbReference type="CDD" id="cd00583">
    <property type="entry name" value="MutH-like"/>
    <property type="match status" value="1"/>
</dbReference>
<dbReference type="FunFam" id="3.40.600.10:FF:000001">
    <property type="entry name" value="DNA mismatch repair protein MutH"/>
    <property type="match status" value="1"/>
</dbReference>
<dbReference type="Gene3D" id="3.40.600.10">
    <property type="entry name" value="DNA mismatch repair MutH/Restriction endonuclease, type II"/>
    <property type="match status" value="1"/>
</dbReference>
<dbReference type="HAMAP" id="MF_00759">
    <property type="entry name" value="MutH"/>
    <property type="match status" value="1"/>
</dbReference>
<dbReference type="InterPro" id="IPR004230">
    <property type="entry name" value="DNA_mismatch_repair_MutH"/>
</dbReference>
<dbReference type="InterPro" id="IPR011337">
    <property type="entry name" value="DNA_rep_MutH/RE_typeII_Sau3AI"/>
</dbReference>
<dbReference type="InterPro" id="IPR037057">
    <property type="entry name" value="DNA_rep_MutH/T2_RE_sf"/>
</dbReference>
<dbReference type="InterPro" id="IPR011335">
    <property type="entry name" value="Restrct_endonuc-II-like"/>
</dbReference>
<dbReference type="NCBIfam" id="TIGR02248">
    <property type="entry name" value="mutH_TIGR"/>
    <property type="match status" value="1"/>
</dbReference>
<dbReference type="NCBIfam" id="NF003458">
    <property type="entry name" value="PRK05070.1"/>
    <property type="match status" value="1"/>
</dbReference>
<dbReference type="Pfam" id="PF02976">
    <property type="entry name" value="MutH"/>
    <property type="match status" value="1"/>
</dbReference>
<dbReference type="SMART" id="SM00927">
    <property type="entry name" value="MutH"/>
    <property type="match status" value="1"/>
</dbReference>
<dbReference type="SUPFAM" id="SSF52980">
    <property type="entry name" value="Restriction endonuclease-like"/>
    <property type="match status" value="1"/>
</dbReference>
<proteinExistence type="inferred from homology"/>
<name>MUTH_SHIF8</name>
<feature type="chain" id="PRO_1000046715" description="DNA mismatch repair protein MutH">
    <location>
        <begin position="1"/>
        <end position="229"/>
    </location>
</feature>
<evidence type="ECO:0000255" key="1">
    <source>
        <dbReference type="HAMAP-Rule" id="MF_00759"/>
    </source>
</evidence>
<reference key="1">
    <citation type="journal article" date="2006" name="BMC Genomics">
        <title>Complete genome sequence of Shigella flexneri 5b and comparison with Shigella flexneri 2a.</title>
        <authorList>
            <person name="Nie H."/>
            <person name="Yang F."/>
            <person name="Zhang X."/>
            <person name="Yang J."/>
            <person name="Chen L."/>
            <person name="Wang J."/>
            <person name="Xiong Z."/>
            <person name="Peng J."/>
            <person name="Sun L."/>
            <person name="Dong J."/>
            <person name="Xue Y."/>
            <person name="Xu X."/>
            <person name="Chen S."/>
            <person name="Yao Z."/>
            <person name="Shen Y."/>
            <person name="Jin Q."/>
        </authorList>
    </citation>
    <scope>NUCLEOTIDE SEQUENCE [LARGE SCALE GENOMIC DNA]</scope>
    <source>
        <strain>8401</strain>
    </source>
</reference>
<keyword id="KW-0963">Cytoplasm</keyword>
<keyword id="KW-0227">DNA damage</keyword>
<keyword id="KW-0234">DNA repair</keyword>
<keyword id="KW-0255">Endonuclease</keyword>
<keyword id="KW-0378">Hydrolase</keyword>
<keyword id="KW-0540">Nuclease</keyword>